<reference key="1">
    <citation type="journal article" date="2009" name="BMC Microbiol.">
        <title>The genome sequence of Geobacter metallireducens: features of metabolism, physiology and regulation common and dissimilar to Geobacter sulfurreducens.</title>
        <authorList>
            <person name="Aklujkar M."/>
            <person name="Krushkal J."/>
            <person name="DiBartolo G."/>
            <person name="Lapidus A."/>
            <person name="Land M.L."/>
            <person name="Lovley D.R."/>
        </authorList>
    </citation>
    <scope>NUCLEOTIDE SEQUENCE [LARGE SCALE GENOMIC DNA]</scope>
    <source>
        <strain>ATCC 53774 / DSM 7210 / GS-15</strain>
    </source>
</reference>
<evidence type="ECO:0000255" key="1">
    <source>
        <dbReference type="HAMAP-Rule" id="MF_01693"/>
    </source>
</evidence>
<organism>
    <name type="scientific">Geobacter metallireducens (strain ATCC 53774 / DSM 7210 / GS-15)</name>
    <dbReference type="NCBI Taxonomy" id="269799"/>
    <lineage>
        <taxon>Bacteria</taxon>
        <taxon>Pseudomonadati</taxon>
        <taxon>Thermodesulfobacteriota</taxon>
        <taxon>Desulfuromonadia</taxon>
        <taxon>Geobacterales</taxon>
        <taxon>Geobacteraceae</taxon>
        <taxon>Geobacter</taxon>
    </lineage>
</organism>
<comment type="function">
    <text evidence="1">Catalyzes the decarboxylative condensation of pimeloyl-[acyl-carrier protein] and L-alanine to produce 8-amino-7-oxononanoate (AON), [acyl-carrier protein], and carbon dioxide.</text>
</comment>
<comment type="catalytic activity">
    <reaction evidence="1">
        <text>6-carboxyhexanoyl-[ACP] + L-alanine + H(+) = (8S)-8-amino-7-oxononanoate + holo-[ACP] + CO2</text>
        <dbReference type="Rhea" id="RHEA:42288"/>
        <dbReference type="Rhea" id="RHEA-COMP:9685"/>
        <dbReference type="Rhea" id="RHEA-COMP:9955"/>
        <dbReference type="ChEBI" id="CHEBI:15378"/>
        <dbReference type="ChEBI" id="CHEBI:16526"/>
        <dbReference type="ChEBI" id="CHEBI:57972"/>
        <dbReference type="ChEBI" id="CHEBI:64479"/>
        <dbReference type="ChEBI" id="CHEBI:78846"/>
        <dbReference type="ChEBI" id="CHEBI:149468"/>
        <dbReference type="EC" id="2.3.1.47"/>
    </reaction>
</comment>
<comment type="cofactor">
    <cofactor evidence="1">
        <name>pyridoxal 5'-phosphate</name>
        <dbReference type="ChEBI" id="CHEBI:597326"/>
    </cofactor>
</comment>
<comment type="pathway">
    <text evidence="1">Cofactor biosynthesis; biotin biosynthesis.</text>
</comment>
<comment type="subunit">
    <text evidence="1">Homodimer.</text>
</comment>
<comment type="similarity">
    <text evidence="1">Belongs to the class-II pyridoxal-phosphate-dependent aminotransferase family. BioF subfamily.</text>
</comment>
<dbReference type="EC" id="2.3.1.47" evidence="1"/>
<dbReference type="EMBL" id="CP000148">
    <property type="protein sequence ID" value="ABB31084.2"/>
    <property type="molecule type" value="Genomic_DNA"/>
</dbReference>
<dbReference type="SMR" id="Q39XE0"/>
<dbReference type="STRING" id="269799.Gmet_0842"/>
<dbReference type="KEGG" id="gme:Gmet_0842"/>
<dbReference type="eggNOG" id="COG0156">
    <property type="taxonomic scope" value="Bacteria"/>
</dbReference>
<dbReference type="HOGENOM" id="CLU_015846_11_0_7"/>
<dbReference type="UniPathway" id="UPA00078"/>
<dbReference type="Proteomes" id="UP000007073">
    <property type="component" value="Chromosome"/>
</dbReference>
<dbReference type="GO" id="GO:0008710">
    <property type="term" value="F:8-amino-7-oxononanoate synthase activity"/>
    <property type="evidence" value="ECO:0007669"/>
    <property type="project" value="UniProtKB-EC"/>
</dbReference>
<dbReference type="GO" id="GO:0030170">
    <property type="term" value="F:pyridoxal phosphate binding"/>
    <property type="evidence" value="ECO:0007669"/>
    <property type="project" value="InterPro"/>
</dbReference>
<dbReference type="GO" id="GO:0009102">
    <property type="term" value="P:biotin biosynthetic process"/>
    <property type="evidence" value="ECO:0007669"/>
    <property type="project" value="UniProtKB-UniPathway"/>
</dbReference>
<dbReference type="CDD" id="cd06454">
    <property type="entry name" value="KBL_like"/>
    <property type="match status" value="1"/>
</dbReference>
<dbReference type="FunFam" id="3.40.640.10:FF:000006">
    <property type="entry name" value="5-aminolevulinate synthase, mitochondrial"/>
    <property type="match status" value="1"/>
</dbReference>
<dbReference type="Gene3D" id="3.90.1150.10">
    <property type="entry name" value="Aspartate Aminotransferase, domain 1"/>
    <property type="match status" value="1"/>
</dbReference>
<dbReference type="Gene3D" id="3.40.640.10">
    <property type="entry name" value="Type I PLP-dependent aspartate aminotransferase-like (Major domain)"/>
    <property type="match status" value="1"/>
</dbReference>
<dbReference type="HAMAP" id="MF_01693">
    <property type="entry name" value="BioF_aminotrans_2"/>
    <property type="match status" value="1"/>
</dbReference>
<dbReference type="InterPro" id="IPR001917">
    <property type="entry name" value="Aminotrans_II_pyridoxalP_BS"/>
</dbReference>
<dbReference type="InterPro" id="IPR004839">
    <property type="entry name" value="Aminotransferase_I/II_large"/>
</dbReference>
<dbReference type="InterPro" id="IPR050087">
    <property type="entry name" value="AON_synthase_class-II"/>
</dbReference>
<dbReference type="InterPro" id="IPR004723">
    <property type="entry name" value="AONS_Archaea/Proteobacteria"/>
</dbReference>
<dbReference type="InterPro" id="IPR022834">
    <property type="entry name" value="AONS_Proteobacteria"/>
</dbReference>
<dbReference type="InterPro" id="IPR015424">
    <property type="entry name" value="PyrdxlP-dep_Trfase"/>
</dbReference>
<dbReference type="InterPro" id="IPR015421">
    <property type="entry name" value="PyrdxlP-dep_Trfase_major"/>
</dbReference>
<dbReference type="InterPro" id="IPR015422">
    <property type="entry name" value="PyrdxlP-dep_Trfase_small"/>
</dbReference>
<dbReference type="NCBIfam" id="TIGR00858">
    <property type="entry name" value="bioF"/>
    <property type="match status" value="1"/>
</dbReference>
<dbReference type="PANTHER" id="PTHR13693:SF100">
    <property type="entry name" value="8-AMINO-7-OXONONANOATE SYNTHASE"/>
    <property type="match status" value="1"/>
</dbReference>
<dbReference type="PANTHER" id="PTHR13693">
    <property type="entry name" value="CLASS II AMINOTRANSFERASE/8-AMINO-7-OXONONANOATE SYNTHASE"/>
    <property type="match status" value="1"/>
</dbReference>
<dbReference type="Pfam" id="PF00155">
    <property type="entry name" value="Aminotran_1_2"/>
    <property type="match status" value="1"/>
</dbReference>
<dbReference type="SUPFAM" id="SSF53383">
    <property type="entry name" value="PLP-dependent transferases"/>
    <property type="match status" value="1"/>
</dbReference>
<dbReference type="PROSITE" id="PS00599">
    <property type="entry name" value="AA_TRANSFER_CLASS_2"/>
    <property type="match status" value="1"/>
</dbReference>
<sequence length="391" mass="41238">MSKSFAEELEMLKAQGLHRRMRRIAGSQGSRAVVDGKEALLLCSNNYLGLADHPRLAEAAIRAVERYGTSSGASRLVSGTMELHALLEERIARFKGTGAALVFNSGYAANSGIIPALVGKGDVVFSDRLNHASIVDGCLLSRATMVRYPHNDTAALRRLMERHETAGRRLLVTDGVFSMDGDMAPLRELAALKREFGALLMVDDAHGTGVLGATGRGSAELQGVMAEIDIHMGTLGKALGSFGAYAAASEDVIDYLANKARSFIFSTSLPPAVLAASLAAVDLVDSPDGAALRERLARNTAFFREGLCAAGFDTMGSETQIVPLFVGGAEETMAFTARLLEAGVFAQGIRPPTVPAGTCRLRCTLMATHAEEDLARAVALMAAIGKGMGVI</sequence>
<proteinExistence type="inferred from homology"/>
<name>BIOF_GEOMG</name>
<feature type="chain" id="PRO_0000380996" description="8-amino-7-oxononanoate synthase">
    <location>
        <begin position="1"/>
        <end position="391"/>
    </location>
</feature>
<feature type="binding site" evidence="1">
    <location>
        <position position="19"/>
    </location>
    <ligand>
        <name>substrate</name>
    </ligand>
</feature>
<feature type="binding site" evidence="1">
    <location>
        <begin position="106"/>
        <end position="107"/>
    </location>
    <ligand>
        <name>pyridoxal 5'-phosphate</name>
        <dbReference type="ChEBI" id="CHEBI:597326"/>
    </ligand>
</feature>
<feature type="binding site" evidence="1">
    <location>
        <position position="131"/>
    </location>
    <ligand>
        <name>substrate</name>
    </ligand>
</feature>
<feature type="binding site" evidence="1">
    <location>
        <position position="178"/>
    </location>
    <ligand>
        <name>pyridoxal 5'-phosphate</name>
        <dbReference type="ChEBI" id="CHEBI:597326"/>
    </ligand>
</feature>
<feature type="binding site" evidence="1">
    <location>
        <position position="206"/>
    </location>
    <ligand>
        <name>pyridoxal 5'-phosphate</name>
        <dbReference type="ChEBI" id="CHEBI:597326"/>
    </ligand>
</feature>
<feature type="binding site" evidence="1">
    <location>
        <position position="234"/>
    </location>
    <ligand>
        <name>pyridoxal 5'-phosphate</name>
        <dbReference type="ChEBI" id="CHEBI:597326"/>
    </ligand>
</feature>
<feature type="binding site" evidence="1">
    <location>
        <position position="353"/>
    </location>
    <ligand>
        <name>substrate</name>
    </ligand>
</feature>
<feature type="modified residue" description="N6-(pyridoxal phosphate)lysine" evidence="1">
    <location>
        <position position="237"/>
    </location>
</feature>
<keyword id="KW-0093">Biotin biosynthesis</keyword>
<keyword id="KW-0663">Pyridoxal phosphate</keyword>
<keyword id="KW-1185">Reference proteome</keyword>
<keyword id="KW-0808">Transferase</keyword>
<gene>
    <name evidence="1" type="primary">bioF</name>
    <name type="ordered locus">Gmet_0842</name>
</gene>
<accession>Q39XE0</accession>
<protein>
    <recommendedName>
        <fullName evidence="1">8-amino-7-oxononanoate synthase</fullName>
        <shortName evidence="1">AONS</shortName>
        <ecNumber evidence="1">2.3.1.47</ecNumber>
    </recommendedName>
    <alternativeName>
        <fullName evidence="1">7-keto-8-amino-pelargonic acid synthase</fullName>
        <shortName evidence="1">7-KAP synthase</shortName>
        <shortName evidence="1">KAPA synthase</shortName>
    </alternativeName>
    <alternativeName>
        <fullName evidence="1">8-amino-7-ketopelargonate synthase</fullName>
    </alternativeName>
</protein>